<name>H16T1_CYRHA</name>
<feature type="signal peptide" evidence="2">
    <location>
        <begin position="1"/>
        <end position="21"/>
    </location>
</feature>
<feature type="propeptide" id="PRO_0000400955" evidence="1">
    <location>
        <begin position="22"/>
        <end position="74"/>
    </location>
</feature>
<feature type="peptide" id="PRO_0000400956" description="U11-theraphotoxin-Hhn1t">
    <location>
        <begin position="75"/>
        <end position="113"/>
    </location>
</feature>
<feature type="region of interest" description="Disordered" evidence="3">
    <location>
        <begin position="60"/>
        <end position="83"/>
    </location>
</feature>
<feature type="compositionally biased region" description="Basic and acidic residues" evidence="3">
    <location>
        <begin position="60"/>
        <end position="69"/>
    </location>
</feature>
<feature type="disulfide bond" evidence="1">
    <location>
        <begin position="75"/>
        <end position="90"/>
    </location>
</feature>
<feature type="disulfide bond" evidence="1">
    <location>
        <begin position="82"/>
        <end position="95"/>
    </location>
</feature>
<feature type="disulfide bond" evidence="1">
    <location>
        <begin position="89"/>
        <end position="110"/>
    </location>
</feature>
<comment type="function">
    <text evidence="1">Probable ion channel inhibitor.</text>
</comment>
<comment type="subcellular location">
    <subcellularLocation>
        <location evidence="1">Secreted</location>
    </subcellularLocation>
</comment>
<comment type="tissue specificity">
    <text>Expressed by the venom gland.</text>
</comment>
<comment type="domain">
    <text evidence="1">The presence of a 'disulfide through disulfide knot' structurally defines this protein as a knottin.</text>
</comment>
<comment type="similarity">
    <text evidence="4">Belongs to the neurotoxin 14 (magi-1) family. 01 (HNTX-16) subfamily.</text>
</comment>
<reference key="1">
    <citation type="journal article" date="2010" name="J. Proteome Res.">
        <title>Molecular diversification of peptide toxins from the tarantula Haplopelma hainanum (Ornithoctonus hainana) venom based on transcriptomic, peptidomic, and genomic analyses.</title>
        <authorList>
            <person name="Tang X."/>
            <person name="Zhang Y."/>
            <person name="Hu W."/>
            <person name="Xu D."/>
            <person name="Tao H."/>
            <person name="Yang X."/>
            <person name="Li Y."/>
            <person name="Jiang L."/>
            <person name="Liang S."/>
        </authorList>
    </citation>
    <scope>NUCLEOTIDE SEQUENCE [LARGE SCALE MRNA]</scope>
    <source>
        <tissue>Venom gland</tissue>
    </source>
</reference>
<sequence length="113" mass="13059">MNTVRVTFLLVFVLAVSLGQADKDENRMEMQEKTEQGKSYLDFAENLLLQKLEELEAKLLEEDSEESRNSRQKRCIGEGVPCDENDPRCCSGLVCLKPTLHGIRYKSYYCYKK</sequence>
<accession>D2Y290</accession>
<protein>
    <recommendedName>
        <fullName>U11-theraphotoxin-Hhn1t</fullName>
        <shortName>U11-TRTX-Hhn1t</shortName>
    </recommendedName>
    <alternativeName>
        <fullName>Hainantoxin-XVI-20</fullName>
        <shortName>HNTX-XVI-20</shortName>
    </alternativeName>
</protein>
<proteinExistence type="evidence at transcript level"/>
<organism>
    <name type="scientific">Cyriopagopus hainanus</name>
    <name type="common">Chinese bird spider</name>
    <name type="synonym">Haplopelma hainanum</name>
    <dbReference type="NCBI Taxonomy" id="209901"/>
    <lineage>
        <taxon>Eukaryota</taxon>
        <taxon>Metazoa</taxon>
        <taxon>Ecdysozoa</taxon>
        <taxon>Arthropoda</taxon>
        <taxon>Chelicerata</taxon>
        <taxon>Arachnida</taxon>
        <taxon>Araneae</taxon>
        <taxon>Mygalomorphae</taxon>
        <taxon>Theraphosidae</taxon>
        <taxon>Haplopelma</taxon>
    </lineage>
</organism>
<dbReference type="EMBL" id="GU292967">
    <property type="protein sequence ID" value="ADB56783.1"/>
    <property type="molecule type" value="mRNA"/>
</dbReference>
<dbReference type="ArachnoServer" id="AS001616">
    <property type="toxin name" value="U11-theraphotoxin-Hhn1t"/>
</dbReference>
<dbReference type="GO" id="GO:0005576">
    <property type="term" value="C:extracellular region"/>
    <property type="evidence" value="ECO:0007669"/>
    <property type="project" value="UniProtKB-SubCell"/>
</dbReference>
<dbReference type="GO" id="GO:0019871">
    <property type="term" value="F:sodium channel inhibitor activity"/>
    <property type="evidence" value="ECO:0007669"/>
    <property type="project" value="InterPro"/>
</dbReference>
<dbReference type="GO" id="GO:0090729">
    <property type="term" value="F:toxin activity"/>
    <property type="evidence" value="ECO:0007669"/>
    <property type="project" value="UniProtKB-KW"/>
</dbReference>
<dbReference type="InterPro" id="IPR012627">
    <property type="entry name" value="Toxin_22"/>
</dbReference>
<dbReference type="Pfam" id="PF08092">
    <property type="entry name" value="Toxin_22"/>
    <property type="match status" value="1"/>
</dbReference>
<keyword id="KW-1015">Disulfide bond</keyword>
<keyword id="KW-0872">Ion channel impairing toxin</keyword>
<keyword id="KW-0960">Knottin</keyword>
<keyword id="KW-0964">Secreted</keyword>
<keyword id="KW-0732">Signal</keyword>
<keyword id="KW-0800">Toxin</keyword>
<evidence type="ECO:0000250" key="1"/>
<evidence type="ECO:0000255" key="2"/>
<evidence type="ECO:0000256" key="3">
    <source>
        <dbReference type="SAM" id="MobiDB-lite"/>
    </source>
</evidence>
<evidence type="ECO:0000305" key="4"/>